<name>VSP1_GLOBL</name>
<protein>
    <recommendedName>
        <fullName>Thrombin-like enzyme halystase</fullName>
        <shortName>SVTLE</shortName>
        <ecNumber>3.4.21.-</ecNumber>
    </recommendedName>
    <alternativeName>
        <fullName>Snake venom serine protease</fullName>
        <shortName>SVSP</shortName>
    </alternativeName>
</protein>
<proteinExistence type="evidence at protein level"/>
<comment type="function">
    <text evidence="3">Thrombin-like snake venom serine protease. Cleaves fibrinogen (beta chain of fibrinogen (FGB) and more slowly alpha chain (FGA)) without inducing fibrin clotting and cleaves kininogen to produce bradykinin (KNG), resulting in the reduction of blood pressure.</text>
</comment>
<comment type="activity regulation">
    <text evidence="3">Inhibited by diisopropylfluorophosphate (DFP), PMSF and leupeptin.</text>
</comment>
<comment type="subunit">
    <text evidence="1">Monomer.</text>
</comment>
<comment type="subcellular location">
    <subcellularLocation>
        <location>Secreted</location>
    </subcellularLocation>
</comment>
<comment type="tissue specificity">
    <text>Expressed by the venom gland.</text>
</comment>
<comment type="miscellaneous">
    <text evidence="4">Negative results: does not coagulate human plasma. Does not inhibit platelet aggregation induced by ADP or collagen (PubMed:9546675).</text>
</comment>
<comment type="similarity">
    <text evidence="2">Belongs to the peptidase S1 family. Snake venom subfamily.</text>
</comment>
<sequence>IIGGDECNINEHRFLVALYTPRSRTLFCGGTLINQEWVLTAAHCDRKNFRIKLGMHSKKVPNKDEQTRVPKEKFFCLSSKNYTLWDKDIMLIRLDSPVKNSTHIEPFSLPSSPPSVGSVCRIMGWGRISPTEETFPDVPHCVNINLLEYEMCRAPYPEFELPATSRTLCAGILEGGKDTCRGDSGGPLICNGQFQGIASWGDDPCAQPHKPAAYTKVFDHLDWIKSIIAGNTDASCPP</sequence>
<organism>
    <name type="scientific">Gloydius blomhoffii</name>
    <name type="common">Mamushi</name>
    <name type="synonym">Agkistrodon halys blomhoffi</name>
    <dbReference type="NCBI Taxonomy" id="242054"/>
    <lineage>
        <taxon>Eukaryota</taxon>
        <taxon>Metazoa</taxon>
        <taxon>Chordata</taxon>
        <taxon>Craniata</taxon>
        <taxon>Vertebrata</taxon>
        <taxon>Euteleostomi</taxon>
        <taxon>Lepidosauria</taxon>
        <taxon>Squamata</taxon>
        <taxon>Bifurcata</taxon>
        <taxon>Unidentata</taxon>
        <taxon>Episquamata</taxon>
        <taxon>Toxicofera</taxon>
        <taxon>Serpentes</taxon>
        <taxon>Colubroidea</taxon>
        <taxon>Viperidae</taxon>
        <taxon>Crotalinae</taxon>
        <taxon>Gloydius</taxon>
    </lineage>
</organism>
<reference key="1">
    <citation type="journal article" date="1998" name="Eur. J. Biochem.">
        <title>Purification and amino acid sequence of halystase from snake venom of Agkistrodon halys blomhoffii, a serine protease that cleaves specifically fibrinogen and kininogen.</title>
        <authorList>
            <person name="Matsui T."/>
            <person name="Sakurai Y."/>
            <person name="Fujimura Y."/>
            <person name="Hayashi I."/>
            <person name="Oh-Ishi S."/>
            <person name="Suzuki M."/>
            <person name="Hamako J."/>
            <person name="Yamamoto Y."/>
            <person name="Yamazaki J."/>
            <person name="Kinoshita M."/>
            <person name="Titani K."/>
        </authorList>
    </citation>
    <scope>PROTEIN SEQUENCE</scope>
    <scope>FUNCTION</scope>
    <scope>ACTIVITY REGULATION</scope>
    <source>
        <tissue>Venom</tissue>
    </source>
</reference>
<accession>P81176</accession>
<feature type="chain" id="PRO_0000088728" description="Thrombin-like enzyme halystase">
    <location>
        <begin position="1"/>
        <end position="238"/>
    </location>
</feature>
<feature type="domain" description="Peptidase S1" evidence="2">
    <location>
        <begin position="1"/>
        <end position="229"/>
    </location>
</feature>
<feature type="active site" description="Charge relay system" evidence="1">
    <location>
        <position position="43"/>
    </location>
</feature>
<feature type="active site" description="Charge relay system" evidence="1">
    <location>
        <position position="88"/>
    </location>
</feature>
<feature type="active site" description="Charge relay system" evidence="1">
    <location>
        <position position="184"/>
    </location>
</feature>
<feature type="glycosylation site" description="N-linked (GlcNAc...) asparagine">
    <location>
        <position position="81"/>
    </location>
</feature>
<feature type="glycosylation site" description="N-linked (GlcNAc...) asparagine">
    <location>
        <position position="100"/>
    </location>
</feature>
<feature type="disulfide bond" evidence="2">
    <location>
        <begin position="7"/>
        <end position="141"/>
    </location>
</feature>
<feature type="disulfide bond" evidence="2">
    <location>
        <begin position="28"/>
        <end position="44"/>
    </location>
</feature>
<feature type="disulfide bond" evidence="2">
    <location>
        <begin position="76"/>
        <end position="236"/>
    </location>
</feature>
<feature type="disulfide bond" evidence="2">
    <location>
        <begin position="120"/>
        <end position="190"/>
    </location>
</feature>
<feature type="disulfide bond" evidence="2">
    <location>
        <begin position="152"/>
        <end position="169"/>
    </location>
</feature>
<feature type="disulfide bond" evidence="2">
    <location>
        <begin position="180"/>
        <end position="205"/>
    </location>
</feature>
<feature type="sequence variant">
    <original>PRS</original>
    <variation>SRY</variation>
    <location>
        <begin position="21"/>
        <end position="23"/>
    </location>
</feature>
<evidence type="ECO:0000250" key="1"/>
<evidence type="ECO:0000255" key="2">
    <source>
        <dbReference type="PROSITE-ProRule" id="PRU00274"/>
    </source>
</evidence>
<evidence type="ECO:0000269" key="3">
    <source>
    </source>
</evidence>
<evidence type="ECO:0000305" key="4">
    <source>
    </source>
</evidence>
<keyword id="KW-0903">Direct protein sequencing</keyword>
<keyword id="KW-1015">Disulfide bond</keyword>
<keyword id="KW-1206">Fibrinogenolytic toxin</keyword>
<keyword id="KW-0325">Glycoprotein</keyword>
<keyword id="KW-1199">Hemostasis impairing toxin</keyword>
<keyword id="KW-0378">Hydrolase</keyword>
<keyword id="KW-0382">Hypotensive agent</keyword>
<keyword id="KW-0645">Protease</keyword>
<keyword id="KW-0964">Secreted</keyword>
<keyword id="KW-0720">Serine protease</keyword>
<keyword id="KW-0800">Toxin</keyword>
<dbReference type="EC" id="3.4.21.-"/>
<dbReference type="SMR" id="P81176"/>
<dbReference type="MEROPS" id="S01.253"/>
<dbReference type="GO" id="GO:0005576">
    <property type="term" value="C:extracellular region"/>
    <property type="evidence" value="ECO:0007669"/>
    <property type="project" value="UniProtKB-SubCell"/>
</dbReference>
<dbReference type="GO" id="GO:0030141">
    <property type="term" value="C:secretory granule"/>
    <property type="evidence" value="ECO:0007669"/>
    <property type="project" value="TreeGrafter"/>
</dbReference>
<dbReference type="GO" id="GO:0004252">
    <property type="term" value="F:serine-type endopeptidase activity"/>
    <property type="evidence" value="ECO:0007669"/>
    <property type="project" value="InterPro"/>
</dbReference>
<dbReference type="GO" id="GO:0090729">
    <property type="term" value="F:toxin activity"/>
    <property type="evidence" value="ECO:0007669"/>
    <property type="project" value="UniProtKB-KW"/>
</dbReference>
<dbReference type="GO" id="GO:0006508">
    <property type="term" value="P:proteolysis"/>
    <property type="evidence" value="ECO:0007669"/>
    <property type="project" value="UniProtKB-KW"/>
</dbReference>
<dbReference type="GO" id="GO:0008217">
    <property type="term" value="P:regulation of blood pressure"/>
    <property type="evidence" value="ECO:0007669"/>
    <property type="project" value="UniProtKB-KW"/>
</dbReference>
<dbReference type="CDD" id="cd00190">
    <property type="entry name" value="Tryp_SPc"/>
    <property type="match status" value="1"/>
</dbReference>
<dbReference type="FunFam" id="2.40.10.10:FF:000158">
    <property type="entry name" value="Thrombin-like enzyme saxthrombin"/>
    <property type="match status" value="1"/>
</dbReference>
<dbReference type="FunFam" id="2.40.10.10:FF:000153">
    <property type="entry name" value="Venom plasminogen activator TSV-PA"/>
    <property type="match status" value="1"/>
</dbReference>
<dbReference type="Gene3D" id="2.40.10.10">
    <property type="entry name" value="Trypsin-like serine proteases"/>
    <property type="match status" value="2"/>
</dbReference>
<dbReference type="InterPro" id="IPR009003">
    <property type="entry name" value="Peptidase_S1_PA"/>
</dbReference>
<dbReference type="InterPro" id="IPR043504">
    <property type="entry name" value="Peptidase_S1_PA_chymotrypsin"/>
</dbReference>
<dbReference type="InterPro" id="IPR001314">
    <property type="entry name" value="Peptidase_S1A"/>
</dbReference>
<dbReference type="InterPro" id="IPR001254">
    <property type="entry name" value="Trypsin_dom"/>
</dbReference>
<dbReference type="InterPro" id="IPR018114">
    <property type="entry name" value="TRYPSIN_HIS"/>
</dbReference>
<dbReference type="InterPro" id="IPR033116">
    <property type="entry name" value="TRYPSIN_SER"/>
</dbReference>
<dbReference type="PANTHER" id="PTHR24271:SF47">
    <property type="entry name" value="KALLIKREIN-1"/>
    <property type="match status" value="1"/>
</dbReference>
<dbReference type="PANTHER" id="PTHR24271">
    <property type="entry name" value="KALLIKREIN-RELATED"/>
    <property type="match status" value="1"/>
</dbReference>
<dbReference type="Pfam" id="PF00089">
    <property type="entry name" value="Trypsin"/>
    <property type="match status" value="1"/>
</dbReference>
<dbReference type="PRINTS" id="PR00722">
    <property type="entry name" value="CHYMOTRYPSIN"/>
</dbReference>
<dbReference type="SMART" id="SM00020">
    <property type="entry name" value="Tryp_SPc"/>
    <property type="match status" value="1"/>
</dbReference>
<dbReference type="SUPFAM" id="SSF50494">
    <property type="entry name" value="Trypsin-like serine proteases"/>
    <property type="match status" value="1"/>
</dbReference>
<dbReference type="PROSITE" id="PS50240">
    <property type="entry name" value="TRYPSIN_DOM"/>
    <property type="match status" value="1"/>
</dbReference>
<dbReference type="PROSITE" id="PS00134">
    <property type="entry name" value="TRYPSIN_HIS"/>
    <property type="match status" value="1"/>
</dbReference>
<dbReference type="PROSITE" id="PS00135">
    <property type="entry name" value="TRYPSIN_SER"/>
    <property type="match status" value="1"/>
</dbReference>